<protein>
    <recommendedName>
        <fullName evidence="1">Ribosomal RNA small subunit methyltransferase J</fullName>
        <ecNumber evidence="1">2.1.1.242</ecNumber>
    </recommendedName>
    <alternativeName>
        <fullName evidence="1">16S rRNA m2G1516 methyltransferase</fullName>
    </alternativeName>
    <alternativeName>
        <fullName evidence="1">rRNA (guanine-N(2)-)-methyltransferase</fullName>
    </alternativeName>
</protein>
<feature type="chain" id="PRO_1000198515" description="Ribosomal RNA small subunit methyltransferase J">
    <location>
        <begin position="1"/>
        <end position="259"/>
    </location>
</feature>
<feature type="binding site" evidence="1">
    <location>
        <begin position="101"/>
        <end position="102"/>
    </location>
    <ligand>
        <name>S-adenosyl-L-methionine</name>
        <dbReference type="ChEBI" id="CHEBI:59789"/>
    </ligand>
</feature>
<feature type="binding site" evidence="1">
    <location>
        <begin position="117"/>
        <end position="118"/>
    </location>
    <ligand>
        <name>S-adenosyl-L-methionine</name>
        <dbReference type="ChEBI" id="CHEBI:59789"/>
    </ligand>
</feature>
<feature type="binding site" evidence="1">
    <location>
        <begin position="153"/>
        <end position="154"/>
    </location>
    <ligand>
        <name>S-adenosyl-L-methionine</name>
        <dbReference type="ChEBI" id="CHEBI:59789"/>
    </ligand>
</feature>
<feature type="binding site" evidence="1">
    <location>
        <position position="176"/>
    </location>
    <ligand>
        <name>S-adenosyl-L-methionine</name>
        <dbReference type="ChEBI" id="CHEBI:59789"/>
    </ligand>
</feature>
<comment type="function">
    <text evidence="1">Specifically methylates the guanosine in position 1516 of 16S rRNA.</text>
</comment>
<comment type="catalytic activity">
    <reaction evidence="1">
        <text>guanosine(1516) in 16S rRNA + S-adenosyl-L-methionine = N(2)-methylguanosine(1516) in 16S rRNA + S-adenosyl-L-homocysteine + H(+)</text>
        <dbReference type="Rhea" id="RHEA:43220"/>
        <dbReference type="Rhea" id="RHEA-COMP:10412"/>
        <dbReference type="Rhea" id="RHEA-COMP:10413"/>
        <dbReference type="ChEBI" id="CHEBI:15378"/>
        <dbReference type="ChEBI" id="CHEBI:57856"/>
        <dbReference type="ChEBI" id="CHEBI:59789"/>
        <dbReference type="ChEBI" id="CHEBI:74269"/>
        <dbReference type="ChEBI" id="CHEBI:74481"/>
        <dbReference type="EC" id="2.1.1.242"/>
    </reaction>
</comment>
<comment type="subcellular location">
    <subcellularLocation>
        <location evidence="1">Cytoplasm</location>
    </subcellularLocation>
</comment>
<comment type="similarity">
    <text evidence="1">Belongs to the methyltransferase superfamily. RsmJ family.</text>
</comment>
<gene>
    <name evidence="1" type="primary">rsmJ</name>
    <name type="ordered locus">VFMJ11_0080</name>
</gene>
<reference key="1">
    <citation type="submission" date="2008-08" db="EMBL/GenBank/DDBJ databases">
        <title>Complete sequence of Vibrio fischeri strain MJ11.</title>
        <authorList>
            <person name="Mandel M.J."/>
            <person name="Stabb E.V."/>
            <person name="Ruby E.G."/>
            <person name="Ferriera S."/>
            <person name="Johnson J."/>
            <person name="Kravitz S."/>
            <person name="Beeson K."/>
            <person name="Sutton G."/>
            <person name="Rogers Y.-H."/>
            <person name="Friedman R."/>
            <person name="Frazier M."/>
            <person name="Venter J.C."/>
        </authorList>
    </citation>
    <scope>NUCLEOTIDE SEQUENCE [LARGE SCALE GENOMIC DNA]</scope>
    <source>
        <strain>MJ11</strain>
    </source>
</reference>
<name>RSMJ_ALIFM</name>
<organism>
    <name type="scientific">Aliivibrio fischeri (strain MJ11)</name>
    <name type="common">Vibrio fischeri</name>
    <dbReference type="NCBI Taxonomy" id="388396"/>
    <lineage>
        <taxon>Bacteria</taxon>
        <taxon>Pseudomonadati</taxon>
        <taxon>Pseudomonadota</taxon>
        <taxon>Gammaproteobacteria</taxon>
        <taxon>Vibrionales</taxon>
        <taxon>Vibrionaceae</taxon>
        <taxon>Aliivibrio</taxon>
    </lineage>
</organism>
<proteinExistence type="inferred from homology"/>
<accession>B5FFB3</accession>
<keyword id="KW-0963">Cytoplasm</keyword>
<keyword id="KW-0489">Methyltransferase</keyword>
<keyword id="KW-0698">rRNA processing</keyword>
<keyword id="KW-0949">S-adenosyl-L-methionine</keyword>
<keyword id="KW-0808">Transferase</keyword>
<sequence length="259" mass="28360">MQIALLSEDPNRQSELEAIAARWGLKHDEDNVFALVLTEQQLELRKRDEPKLGAIFVDLVSGAVAHRRKFGGGKGQSIAKAVGLNKGATPIVLDGTAGLGRDAFVLASLGCKVQMVERHPVVAALLDDGLARAKQDAEIGVWVAERMSLLHASSHDALEQLMAQDDFVQPDVVYLDPMYPHPVNKKKSALVKKEMRVFQSLVGADNDADALLAPALLMATKRVVVKRPDYAEWLDNQKPSMAIETKKNRFDVYVNAAMA</sequence>
<dbReference type="EC" id="2.1.1.242" evidence="1"/>
<dbReference type="EMBL" id="CP001139">
    <property type="protein sequence ID" value="ACH65150.1"/>
    <property type="molecule type" value="Genomic_DNA"/>
</dbReference>
<dbReference type="RefSeq" id="WP_012532851.1">
    <property type="nucleotide sequence ID" value="NC_011184.1"/>
</dbReference>
<dbReference type="SMR" id="B5FFB3"/>
<dbReference type="KEGG" id="vfm:VFMJ11_0080"/>
<dbReference type="HOGENOM" id="CLU_076324_0_0_6"/>
<dbReference type="Proteomes" id="UP000001857">
    <property type="component" value="Chromosome I"/>
</dbReference>
<dbReference type="GO" id="GO:0005737">
    <property type="term" value="C:cytoplasm"/>
    <property type="evidence" value="ECO:0007669"/>
    <property type="project" value="UniProtKB-SubCell"/>
</dbReference>
<dbReference type="GO" id="GO:0008990">
    <property type="term" value="F:rRNA (guanine-N2-)-methyltransferase activity"/>
    <property type="evidence" value="ECO:0007669"/>
    <property type="project" value="UniProtKB-UniRule"/>
</dbReference>
<dbReference type="CDD" id="cd02440">
    <property type="entry name" value="AdoMet_MTases"/>
    <property type="match status" value="1"/>
</dbReference>
<dbReference type="Gene3D" id="3.40.50.150">
    <property type="entry name" value="Vaccinia Virus protein VP39"/>
    <property type="match status" value="1"/>
</dbReference>
<dbReference type="Gene3D" id="3.40.1630.10">
    <property type="entry name" value="YhiQ-like domain"/>
    <property type="match status" value="1"/>
</dbReference>
<dbReference type="HAMAP" id="MF_01523">
    <property type="entry name" value="16SrRNA_methyltr_J"/>
    <property type="match status" value="1"/>
</dbReference>
<dbReference type="InterPro" id="IPR007536">
    <property type="entry name" value="16SrRNA_methylTrfase_J"/>
</dbReference>
<dbReference type="InterPro" id="IPR029063">
    <property type="entry name" value="SAM-dependent_MTases_sf"/>
</dbReference>
<dbReference type="PANTHER" id="PTHR36112">
    <property type="entry name" value="RIBOSOMAL RNA SMALL SUBUNIT METHYLTRANSFERASE J"/>
    <property type="match status" value="1"/>
</dbReference>
<dbReference type="PANTHER" id="PTHR36112:SF1">
    <property type="entry name" value="RIBOSOMAL RNA SMALL SUBUNIT METHYLTRANSFERASE J"/>
    <property type="match status" value="1"/>
</dbReference>
<dbReference type="Pfam" id="PF04445">
    <property type="entry name" value="SAM_MT"/>
    <property type="match status" value="1"/>
</dbReference>
<dbReference type="SUPFAM" id="SSF53335">
    <property type="entry name" value="S-adenosyl-L-methionine-dependent methyltransferases"/>
    <property type="match status" value="1"/>
</dbReference>
<evidence type="ECO:0000255" key="1">
    <source>
        <dbReference type="HAMAP-Rule" id="MF_01523"/>
    </source>
</evidence>